<comment type="function">
    <text evidence="1">Cell wall formation. Adds enolpyruvyl to UDP-N-acetylglucosamine.</text>
</comment>
<comment type="catalytic activity">
    <reaction evidence="1">
        <text>phosphoenolpyruvate + UDP-N-acetyl-alpha-D-glucosamine = UDP-N-acetyl-3-O-(1-carboxyvinyl)-alpha-D-glucosamine + phosphate</text>
        <dbReference type="Rhea" id="RHEA:18681"/>
        <dbReference type="ChEBI" id="CHEBI:43474"/>
        <dbReference type="ChEBI" id="CHEBI:57705"/>
        <dbReference type="ChEBI" id="CHEBI:58702"/>
        <dbReference type="ChEBI" id="CHEBI:68483"/>
        <dbReference type="EC" id="2.5.1.7"/>
    </reaction>
</comment>
<comment type="pathway">
    <text evidence="1">Cell wall biogenesis; peptidoglycan biosynthesis.</text>
</comment>
<comment type="subcellular location">
    <subcellularLocation>
        <location evidence="1">Cytoplasm</location>
    </subcellularLocation>
</comment>
<comment type="similarity">
    <text evidence="1">Belongs to the EPSP synthase family. MurA subfamily.</text>
</comment>
<gene>
    <name evidence="1" type="primary">murA1</name>
    <name type="ordered locus">SAB1984c</name>
</gene>
<protein>
    <recommendedName>
        <fullName evidence="1">UDP-N-acetylglucosamine 1-carboxyvinyltransferase 1</fullName>
        <ecNumber evidence="1">2.5.1.7</ecNumber>
    </recommendedName>
    <alternativeName>
        <fullName evidence="1">Enoylpyruvate transferase 1</fullName>
    </alternativeName>
    <alternativeName>
        <fullName evidence="1">UDP-N-acetylglucosamine enolpyruvyl transferase 1</fullName>
        <shortName evidence="1">EPT 1</shortName>
    </alternativeName>
</protein>
<proteinExistence type="inferred from homology"/>
<keyword id="KW-0131">Cell cycle</keyword>
<keyword id="KW-0132">Cell division</keyword>
<keyword id="KW-0133">Cell shape</keyword>
<keyword id="KW-0961">Cell wall biogenesis/degradation</keyword>
<keyword id="KW-0963">Cytoplasm</keyword>
<keyword id="KW-0573">Peptidoglycan synthesis</keyword>
<keyword id="KW-0670">Pyruvate</keyword>
<keyword id="KW-0808">Transferase</keyword>
<reference key="1">
    <citation type="journal article" date="2007" name="PLoS ONE">
        <title>Molecular correlates of host specialization in Staphylococcus aureus.</title>
        <authorList>
            <person name="Herron-Olson L."/>
            <person name="Fitzgerald J.R."/>
            <person name="Musser J.M."/>
            <person name="Kapur V."/>
        </authorList>
    </citation>
    <scope>NUCLEOTIDE SEQUENCE [LARGE SCALE GENOMIC DNA]</scope>
    <source>
        <strain>bovine RF122 / ET3-1</strain>
    </source>
</reference>
<feature type="chain" id="PRO_0000231266" description="UDP-N-acetylglucosamine 1-carboxyvinyltransferase 1">
    <location>
        <begin position="1"/>
        <end position="421"/>
    </location>
</feature>
<feature type="active site" description="Proton donor" evidence="1">
    <location>
        <position position="119"/>
    </location>
</feature>
<feature type="binding site" evidence="1">
    <location>
        <begin position="22"/>
        <end position="23"/>
    </location>
    <ligand>
        <name>phosphoenolpyruvate</name>
        <dbReference type="ChEBI" id="CHEBI:58702"/>
    </ligand>
</feature>
<feature type="binding site" evidence="1">
    <location>
        <position position="95"/>
    </location>
    <ligand>
        <name>UDP-N-acetyl-alpha-D-glucosamine</name>
        <dbReference type="ChEBI" id="CHEBI:57705"/>
    </ligand>
</feature>
<feature type="binding site" evidence="1">
    <location>
        <begin position="124"/>
        <end position="128"/>
    </location>
    <ligand>
        <name>UDP-N-acetyl-alpha-D-glucosamine</name>
        <dbReference type="ChEBI" id="CHEBI:57705"/>
    </ligand>
</feature>
<feature type="binding site" evidence="1">
    <location>
        <position position="308"/>
    </location>
    <ligand>
        <name>UDP-N-acetyl-alpha-D-glucosamine</name>
        <dbReference type="ChEBI" id="CHEBI:57705"/>
    </ligand>
</feature>
<feature type="binding site" evidence="1">
    <location>
        <position position="330"/>
    </location>
    <ligand>
        <name>UDP-N-acetyl-alpha-D-glucosamine</name>
        <dbReference type="ChEBI" id="CHEBI:57705"/>
    </ligand>
</feature>
<feature type="modified residue" description="2-(S-cysteinyl)pyruvic acid O-phosphothioketal" evidence="1">
    <location>
        <position position="119"/>
    </location>
</feature>
<sequence>MDKIVIKGGNKLTGEVKVEGAKNAVLPILTASLLASDKPSKLVNVPALSDVETINNVLTTLNADVTYKKDENAVVVDATKTLNEEAPYEYVSKMRASILVMGPLLARLGHAIVALPGGCAIGSRPIEQHIKGFEALGAEIHLENGNIYANAKDGLKGTSIHLDFPSVGATQNIIMAASLAKGKTLIENAAKEPEIVDLANYINEMGGRITGAGTDTITINGVESLHGVEHAIIPDRIEAGTLLIAGAITRGDIFVRGAIKEHMASLVYKLEEMGVELDYQEDGIRVRAEGDLQPVDIKTLPHPGFPTDMQSQMMALLLTANGHKVVTETVFENRFMHVAEFKRMNANINVEGRSAKLEGKSQLQGAQVKATDLRAAAALILAGLVADGKTSVTELNHLDRGYVDLHGKLKQLGAEIERIND</sequence>
<organism>
    <name type="scientific">Staphylococcus aureus (strain bovine RF122 / ET3-1)</name>
    <dbReference type="NCBI Taxonomy" id="273036"/>
    <lineage>
        <taxon>Bacteria</taxon>
        <taxon>Bacillati</taxon>
        <taxon>Bacillota</taxon>
        <taxon>Bacilli</taxon>
        <taxon>Bacillales</taxon>
        <taxon>Staphylococcaceae</taxon>
        <taxon>Staphylococcus</taxon>
    </lineage>
</organism>
<dbReference type="EC" id="2.5.1.7" evidence="1"/>
<dbReference type="EMBL" id="AJ938182">
    <property type="protein sequence ID" value="CAI81673.1"/>
    <property type="molecule type" value="Genomic_DNA"/>
</dbReference>
<dbReference type="RefSeq" id="WP_000358003.1">
    <property type="nucleotide sequence ID" value="NC_007622.1"/>
</dbReference>
<dbReference type="SMR" id="Q2YUK4"/>
<dbReference type="KEGG" id="sab:SAB1984c"/>
<dbReference type="HOGENOM" id="CLU_027387_0_0_9"/>
<dbReference type="UniPathway" id="UPA00219"/>
<dbReference type="GO" id="GO:0005737">
    <property type="term" value="C:cytoplasm"/>
    <property type="evidence" value="ECO:0007669"/>
    <property type="project" value="UniProtKB-SubCell"/>
</dbReference>
<dbReference type="GO" id="GO:0008760">
    <property type="term" value="F:UDP-N-acetylglucosamine 1-carboxyvinyltransferase activity"/>
    <property type="evidence" value="ECO:0007669"/>
    <property type="project" value="UniProtKB-UniRule"/>
</dbReference>
<dbReference type="GO" id="GO:0051301">
    <property type="term" value="P:cell division"/>
    <property type="evidence" value="ECO:0007669"/>
    <property type="project" value="UniProtKB-KW"/>
</dbReference>
<dbReference type="GO" id="GO:0071555">
    <property type="term" value="P:cell wall organization"/>
    <property type="evidence" value="ECO:0007669"/>
    <property type="project" value="UniProtKB-KW"/>
</dbReference>
<dbReference type="GO" id="GO:0009252">
    <property type="term" value="P:peptidoglycan biosynthetic process"/>
    <property type="evidence" value="ECO:0007669"/>
    <property type="project" value="UniProtKB-UniRule"/>
</dbReference>
<dbReference type="GO" id="GO:0008360">
    <property type="term" value="P:regulation of cell shape"/>
    <property type="evidence" value="ECO:0007669"/>
    <property type="project" value="UniProtKB-KW"/>
</dbReference>
<dbReference type="GO" id="GO:0019277">
    <property type="term" value="P:UDP-N-acetylgalactosamine biosynthetic process"/>
    <property type="evidence" value="ECO:0007669"/>
    <property type="project" value="InterPro"/>
</dbReference>
<dbReference type="CDD" id="cd01555">
    <property type="entry name" value="UdpNAET"/>
    <property type="match status" value="1"/>
</dbReference>
<dbReference type="FunFam" id="3.65.10.10:FF:000001">
    <property type="entry name" value="UDP-N-acetylglucosamine 1-carboxyvinyltransferase"/>
    <property type="match status" value="1"/>
</dbReference>
<dbReference type="Gene3D" id="3.65.10.10">
    <property type="entry name" value="Enolpyruvate transferase domain"/>
    <property type="match status" value="2"/>
</dbReference>
<dbReference type="HAMAP" id="MF_00111">
    <property type="entry name" value="MurA"/>
    <property type="match status" value="1"/>
</dbReference>
<dbReference type="InterPro" id="IPR001986">
    <property type="entry name" value="Enolpyruvate_Tfrase_dom"/>
</dbReference>
<dbReference type="InterPro" id="IPR036968">
    <property type="entry name" value="Enolpyruvate_Tfrase_sf"/>
</dbReference>
<dbReference type="InterPro" id="IPR050068">
    <property type="entry name" value="MurA_subfamily"/>
</dbReference>
<dbReference type="InterPro" id="IPR013792">
    <property type="entry name" value="RNA3'P_cycl/enolpyr_Trfase_a/b"/>
</dbReference>
<dbReference type="InterPro" id="IPR005750">
    <property type="entry name" value="UDP_GlcNAc_COvinyl_MurA"/>
</dbReference>
<dbReference type="NCBIfam" id="TIGR01072">
    <property type="entry name" value="murA"/>
    <property type="match status" value="1"/>
</dbReference>
<dbReference type="NCBIfam" id="NF006873">
    <property type="entry name" value="PRK09369.1"/>
    <property type="match status" value="1"/>
</dbReference>
<dbReference type="PANTHER" id="PTHR43783">
    <property type="entry name" value="UDP-N-ACETYLGLUCOSAMINE 1-CARBOXYVINYLTRANSFERASE"/>
    <property type="match status" value="1"/>
</dbReference>
<dbReference type="PANTHER" id="PTHR43783:SF1">
    <property type="entry name" value="UDP-N-ACETYLGLUCOSAMINE 1-CARBOXYVINYLTRANSFERASE"/>
    <property type="match status" value="1"/>
</dbReference>
<dbReference type="Pfam" id="PF00275">
    <property type="entry name" value="EPSP_synthase"/>
    <property type="match status" value="1"/>
</dbReference>
<dbReference type="SUPFAM" id="SSF55205">
    <property type="entry name" value="EPT/RTPC-like"/>
    <property type="match status" value="1"/>
</dbReference>
<name>MURA1_STAAB</name>
<evidence type="ECO:0000255" key="1">
    <source>
        <dbReference type="HAMAP-Rule" id="MF_00111"/>
    </source>
</evidence>
<accession>Q2YUK4</accession>